<protein>
    <recommendedName>
        <fullName>Calcium and integrin-binding family member 2</fullName>
    </recommendedName>
    <alternativeName>
        <fullName>Kinase-interacting protein 2</fullName>
        <shortName>KIP 2</shortName>
    </alternativeName>
</protein>
<comment type="function">
    <text evidence="1 4 5 7">Calcium- and integrin-binding protein that plays a role in intracellular calcium homeostasis (By similarity). Acts as an auxiliary subunit of the sensory mechanoelectrical transduction (MET) channel in hair cells (By similarity). Essential for mechanoelectrical transduction (MET) currents in auditory hair cells and thereby required for hearing (By similarity). Regulates the function of hair cell mechanotransduction by controlling the distribution of transmembrane channel-like proteins TMC1 and TMC2, and by regulating the function of the MET channels in hair cells (By similarity). Required for the maintenance of auditory hair cell stereocilia bundle morphology and function and for hair-cell survival in the cochlea (By similarity). Critical for proper photoreceptor cell maintenance and function (By similarity). Plays a role in intracellular calcium homeostasis by decreasing ATP-induced calcium release (PubMed:23023331, PubMed:26173970, PubMed:26426422).</text>
</comment>
<comment type="subunit">
    <text evidence="3 4 7 8 10 11">Monomer (PubMed:31636333). Homodimer (PubMed:23023331). Interacts with WHRN and MYO7A (PubMed:23023331, PubMed:26426422). Interacts with ITGA2B (via C-terminus cytoplasmic tail region); the interactions are stabilized/increased in a calcium and magnesium-dependent manner (PubMed:22779914). Interacts with ITGA7 (via C-terminus cytoplasmic tail region); the interactions are stabilized/increased in a calcium and magnesium-dependent manner (PubMed:22779914). Interacts with TMC1 (PubMed:28663585, PubMed:34089643). Interacts with TMC2 (PubMed:28663585).</text>
</comment>
<comment type="subcellular location">
    <subcellularLocation>
        <location evidence="1">Cytoplasm</location>
    </subcellularLocation>
    <subcellularLocation>
        <location evidence="5 7">Cell projection</location>
        <location evidence="5 7">Stereocilium</location>
    </subcellularLocation>
    <subcellularLocation>
        <location evidence="1">Photoreceptor inner segment</location>
    </subcellularLocation>
    <subcellularLocation>
        <location evidence="1">Cell projection</location>
        <location evidence="1">Cilium</location>
        <location evidence="1">Photoreceptor outer segment</location>
    </subcellularLocation>
    <subcellularLocation>
        <location evidence="1">Cell membrane</location>
        <location evidence="1">Sarcolemma</location>
    </subcellularLocation>
    <text evidence="1 5 7">Colocalizes with ITGA7 at the myotendinous junctions (MTJ) and at the neuromuscular junctions (NMJ) (By similarity). Located mainly in stereocilia and at the apical surface of hair cells of the cochlea (By similarity). Localizes in the cuticular plate along and at the tip of the stereocilia of vestibular sensory hair cells (PubMed:26173970, PubMed:26426422).</text>
</comment>
<comment type="alternative products">
    <event type="alternative splicing"/>
    <isoform>
        <id>O75838-1</id>
        <name>1</name>
        <sequence type="displayed"/>
    </isoform>
    <isoform>
        <id>O75838-2</id>
        <name>2</name>
        <sequence type="described" ref="VSP_053864"/>
    </isoform>
    <isoform>
        <id>O75838-3</id>
        <name>3</name>
        <sequence type="described" ref="VSP_053863"/>
    </isoform>
    <isoform>
        <id>O75838-4</id>
        <name>4</name>
        <sequence type="described" ref="VSP_054777"/>
    </isoform>
</comment>
<comment type="tissue specificity">
    <text evidence="4">Widely expressed (PubMed:23023331).</text>
</comment>
<comment type="mass spectrometry"/>
<comment type="disease" evidence="4 5 7 8 9 11">
    <disease id="DI-03551">
        <name>Deafness, autosomal recessive, 48</name>
        <acronym>DFNB48</acronym>
        <description>A form of non-syndromic sensorineural hearing loss. Sensorineural deafness results from damage to the neural receptors of the inner ear, the nerve pathways to the brain, or the area of the brain that receives sound information. DFNB48 patients have prelingual onset of severe to profound sensorineural hearing loss affecting all frequencies.</description>
        <dbReference type="MIM" id="609439"/>
    </disease>
    <text>The disease is caused by variants affecting the gene represented in this entry.</text>
</comment>
<comment type="disease" evidence="4">
    <disease id="DI-03552">
        <name>Usher syndrome 1J</name>
        <acronym>USH1J</acronym>
        <description>USH is a genetically heterogeneous condition characterized by the association of retinitis pigmentosa with sensorineural deafness. Age at onset and differences in auditory and vestibular function distinguish Usher syndrome type 1 (USH1), Usher syndrome type 2 (USH2) and Usher syndrome type 3 (USH3). USH1 is characterized by profound congenital sensorineural deafness, absent vestibular function and prepubertal onset of progressive retinitis pigmentosa leading to blindness.</description>
        <dbReference type="MIM" id="614869"/>
    </disease>
    <text>The disease is caused by variants affecting the gene represented in this entry.</text>
</comment>
<comment type="miscellaneous">
    <text evidence="3">The binding of either calcium or magnesium significantly increases the structural stability of the protein in comparison to apo-CIB (calcium- and magnesium-free form) (PubMed:22779914).</text>
</comment>
<gene>
    <name type="primary">CIB2</name>
    <name type="synonym">KIP2</name>
</gene>
<reference key="1">
    <citation type="journal article" date="1999" name="Biochim. Biophys. Acta">
        <title>Structure, expression profile and chromosomal location of an isolog of DNA-PKcs interacting protein (KIP) gene.</title>
        <authorList>
            <person name="Seki N."/>
            <person name="Hattori A."/>
            <person name="Hayashi A."/>
            <person name="Kozuma S."/>
            <person name="Ohira M."/>
            <person name="Hori T."/>
            <person name="Saito T."/>
        </authorList>
    </citation>
    <scope>NUCLEOTIDE SEQUENCE [MRNA] (ISOFORM 1)</scope>
    <source>
        <tissue>Fetal brain</tissue>
    </source>
</reference>
<reference key="2">
    <citation type="journal article" date="2004" name="Nat. Genet.">
        <title>Complete sequencing and characterization of 21,243 full-length human cDNAs.</title>
        <authorList>
            <person name="Ota T."/>
            <person name="Suzuki Y."/>
            <person name="Nishikawa T."/>
            <person name="Otsuki T."/>
            <person name="Sugiyama T."/>
            <person name="Irie R."/>
            <person name="Wakamatsu A."/>
            <person name="Hayashi K."/>
            <person name="Sato H."/>
            <person name="Nagai K."/>
            <person name="Kimura K."/>
            <person name="Makita H."/>
            <person name="Sekine M."/>
            <person name="Obayashi M."/>
            <person name="Nishi T."/>
            <person name="Shibahara T."/>
            <person name="Tanaka T."/>
            <person name="Ishii S."/>
            <person name="Yamamoto J."/>
            <person name="Saito K."/>
            <person name="Kawai Y."/>
            <person name="Isono Y."/>
            <person name="Nakamura Y."/>
            <person name="Nagahari K."/>
            <person name="Murakami K."/>
            <person name="Yasuda T."/>
            <person name="Iwayanagi T."/>
            <person name="Wagatsuma M."/>
            <person name="Shiratori A."/>
            <person name="Sudo H."/>
            <person name="Hosoiri T."/>
            <person name="Kaku Y."/>
            <person name="Kodaira H."/>
            <person name="Kondo H."/>
            <person name="Sugawara M."/>
            <person name="Takahashi M."/>
            <person name="Kanda K."/>
            <person name="Yokoi T."/>
            <person name="Furuya T."/>
            <person name="Kikkawa E."/>
            <person name="Omura Y."/>
            <person name="Abe K."/>
            <person name="Kamihara K."/>
            <person name="Katsuta N."/>
            <person name="Sato K."/>
            <person name="Tanikawa M."/>
            <person name="Yamazaki M."/>
            <person name="Ninomiya K."/>
            <person name="Ishibashi T."/>
            <person name="Yamashita H."/>
            <person name="Murakawa K."/>
            <person name="Fujimori K."/>
            <person name="Tanai H."/>
            <person name="Kimata M."/>
            <person name="Watanabe M."/>
            <person name="Hiraoka S."/>
            <person name="Chiba Y."/>
            <person name="Ishida S."/>
            <person name="Ono Y."/>
            <person name="Takiguchi S."/>
            <person name="Watanabe S."/>
            <person name="Yosida M."/>
            <person name="Hotuta T."/>
            <person name="Kusano J."/>
            <person name="Kanehori K."/>
            <person name="Takahashi-Fujii A."/>
            <person name="Hara H."/>
            <person name="Tanase T.-O."/>
            <person name="Nomura Y."/>
            <person name="Togiya S."/>
            <person name="Komai F."/>
            <person name="Hara R."/>
            <person name="Takeuchi K."/>
            <person name="Arita M."/>
            <person name="Imose N."/>
            <person name="Musashino K."/>
            <person name="Yuuki H."/>
            <person name="Oshima A."/>
            <person name="Sasaki N."/>
            <person name="Aotsuka S."/>
            <person name="Yoshikawa Y."/>
            <person name="Matsunawa H."/>
            <person name="Ichihara T."/>
            <person name="Shiohata N."/>
            <person name="Sano S."/>
            <person name="Moriya S."/>
            <person name="Momiyama H."/>
            <person name="Satoh N."/>
            <person name="Takami S."/>
            <person name="Terashima Y."/>
            <person name="Suzuki O."/>
            <person name="Nakagawa S."/>
            <person name="Senoh A."/>
            <person name="Mizoguchi H."/>
            <person name="Goto Y."/>
            <person name="Shimizu F."/>
            <person name="Wakebe H."/>
            <person name="Hishigaki H."/>
            <person name="Watanabe T."/>
            <person name="Sugiyama A."/>
            <person name="Takemoto M."/>
            <person name="Kawakami B."/>
            <person name="Yamazaki M."/>
            <person name="Watanabe K."/>
            <person name="Kumagai A."/>
            <person name="Itakura S."/>
            <person name="Fukuzumi Y."/>
            <person name="Fujimori Y."/>
            <person name="Komiyama M."/>
            <person name="Tashiro H."/>
            <person name="Tanigami A."/>
            <person name="Fujiwara T."/>
            <person name="Ono T."/>
            <person name="Yamada K."/>
            <person name="Fujii Y."/>
            <person name="Ozaki K."/>
            <person name="Hirao M."/>
            <person name="Ohmori Y."/>
            <person name="Kawabata A."/>
            <person name="Hikiji T."/>
            <person name="Kobatake N."/>
            <person name="Inagaki H."/>
            <person name="Ikema Y."/>
            <person name="Okamoto S."/>
            <person name="Okitani R."/>
            <person name="Kawakami T."/>
            <person name="Noguchi S."/>
            <person name="Itoh T."/>
            <person name="Shigeta K."/>
            <person name="Senba T."/>
            <person name="Matsumura K."/>
            <person name="Nakajima Y."/>
            <person name="Mizuno T."/>
            <person name="Morinaga M."/>
            <person name="Sasaki M."/>
            <person name="Togashi T."/>
            <person name="Oyama M."/>
            <person name="Hata H."/>
            <person name="Watanabe M."/>
            <person name="Komatsu T."/>
            <person name="Mizushima-Sugano J."/>
            <person name="Satoh T."/>
            <person name="Shirai Y."/>
            <person name="Takahashi Y."/>
            <person name="Nakagawa K."/>
            <person name="Okumura K."/>
            <person name="Nagase T."/>
            <person name="Nomura N."/>
            <person name="Kikuchi H."/>
            <person name="Masuho Y."/>
            <person name="Yamashita R."/>
            <person name="Nakai K."/>
            <person name="Yada T."/>
            <person name="Nakamura Y."/>
            <person name="Ohara O."/>
            <person name="Isogai T."/>
            <person name="Sugano S."/>
        </authorList>
    </citation>
    <scope>NUCLEOTIDE SEQUENCE [LARGE SCALE MRNA] (ISOFORM 2)</scope>
</reference>
<reference key="3">
    <citation type="journal article" date="2006" name="Nature">
        <title>Analysis of the DNA sequence and duplication history of human chromosome 15.</title>
        <authorList>
            <person name="Zody M.C."/>
            <person name="Garber M."/>
            <person name="Sharpe T."/>
            <person name="Young S.K."/>
            <person name="Rowen L."/>
            <person name="O'Neill K."/>
            <person name="Whittaker C.A."/>
            <person name="Kamal M."/>
            <person name="Chang J.L."/>
            <person name="Cuomo C.A."/>
            <person name="Dewar K."/>
            <person name="FitzGerald M.G."/>
            <person name="Kodira C.D."/>
            <person name="Madan A."/>
            <person name="Qin S."/>
            <person name="Yang X."/>
            <person name="Abbasi N."/>
            <person name="Abouelleil A."/>
            <person name="Arachchi H.M."/>
            <person name="Baradarani L."/>
            <person name="Birditt B."/>
            <person name="Bloom S."/>
            <person name="Bloom T."/>
            <person name="Borowsky M.L."/>
            <person name="Burke J."/>
            <person name="Butler J."/>
            <person name="Cook A."/>
            <person name="DeArellano K."/>
            <person name="DeCaprio D."/>
            <person name="Dorris L. III"/>
            <person name="Dors M."/>
            <person name="Eichler E.E."/>
            <person name="Engels R."/>
            <person name="Fahey J."/>
            <person name="Fleetwood P."/>
            <person name="Friedman C."/>
            <person name="Gearin G."/>
            <person name="Hall J.L."/>
            <person name="Hensley G."/>
            <person name="Johnson E."/>
            <person name="Jones C."/>
            <person name="Kamat A."/>
            <person name="Kaur A."/>
            <person name="Locke D.P."/>
            <person name="Madan A."/>
            <person name="Munson G."/>
            <person name="Jaffe D.B."/>
            <person name="Lui A."/>
            <person name="Macdonald P."/>
            <person name="Mauceli E."/>
            <person name="Naylor J.W."/>
            <person name="Nesbitt R."/>
            <person name="Nicol R."/>
            <person name="O'Leary S.B."/>
            <person name="Ratcliffe A."/>
            <person name="Rounsley S."/>
            <person name="She X."/>
            <person name="Sneddon K.M.B."/>
            <person name="Stewart S."/>
            <person name="Sougnez C."/>
            <person name="Stone S.M."/>
            <person name="Topham K."/>
            <person name="Vincent D."/>
            <person name="Wang S."/>
            <person name="Zimmer A.R."/>
            <person name="Birren B.W."/>
            <person name="Hood L."/>
            <person name="Lander E.S."/>
            <person name="Nusbaum C."/>
        </authorList>
    </citation>
    <scope>NUCLEOTIDE SEQUENCE [LARGE SCALE GENOMIC DNA]</scope>
</reference>
<reference key="4">
    <citation type="submission" date="2005-09" db="EMBL/GenBank/DDBJ databases">
        <authorList>
            <person name="Mural R.J."/>
            <person name="Istrail S."/>
            <person name="Sutton G."/>
            <person name="Florea L."/>
            <person name="Halpern A.L."/>
            <person name="Mobarry C.M."/>
            <person name="Lippert R."/>
            <person name="Walenz B."/>
            <person name="Shatkay H."/>
            <person name="Dew I."/>
            <person name="Miller J.R."/>
            <person name="Flanigan M.J."/>
            <person name="Edwards N.J."/>
            <person name="Bolanos R."/>
            <person name="Fasulo D."/>
            <person name="Halldorsson B.V."/>
            <person name="Hannenhalli S."/>
            <person name="Turner R."/>
            <person name="Yooseph S."/>
            <person name="Lu F."/>
            <person name="Nusskern D.R."/>
            <person name="Shue B.C."/>
            <person name="Zheng X.H."/>
            <person name="Zhong F."/>
            <person name="Delcher A.L."/>
            <person name="Huson D.H."/>
            <person name="Kravitz S.A."/>
            <person name="Mouchard L."/>
            <person name="Reinert K."/>
            <person name="Remington K.A."/>
            <person name="Clark A.G."/>
            <person name="Waterman M.S."/>
            <person name="Eichler E.E."/>
            <person name="Adams M.D."/>
            <person name="Hunkapiller M.W."/>
            <person name="Myers E.W."/>
            <person name="Venter J.C."/>
        </authorList>
    </citation>
    <scope>NUCLEOTIDE SEQUENCE [LARGE SCALE GENOMIC DNA]</scope>
</reference>
<reference key="5">
    <citation type="journal article" date="2004" name="Genome Res.">
        <title>The status, quality, and expansion of the NIH full-length cDNA project: the Mammalian Gene Collection (MGC).</title>
        <authorList>
            <consortium name="The MGC Project Team"/>
        </authorList>
    </citation>
    <scope>NUCLEOTIDE SEQUENCE [LARGE SCALE MRNA] (ISOFORMS 1 AND 3)</scope>
    <source>
        <tissue>Brain</tissue>
        <tissue>Skin</tissue>
    </source>
</reference>
<reference key="6">
    <citation type="journal article" date="2012" name="Biochem. Cell Biol.">
        <title>Biophysical and structural studies of the human calcium- and integrin-binding protein family: understanding their functional similarities and differences.</title>
        <authorList>
            <person name="Huang H."/>
            <person name="Bogstie J.N."/>
            <person name="Vogel H.J."/>
        </authorList>
    </citation>
    <scope>INTERACTION WITH ITGA2B AND ITGA7</scope>
    <scope>CALCIUM-BINDING</scope>
    <scope>MAGNESIUM-BINDING</scope>
</reference>
<reference key="7">
    <citation type="journal article" date="2019" name="Sci. Rep.">
        <title>Oligomeric state, hydrodynamic properties and target recognition of human Calcium and Integrin Binding protein 2 (CIB2).</title>
        <authorList>
            <person name="Dal Cortivo G."/>
            <person name="Marino V."/>
            <person name="Iacobucci C."/>
            <person name="Vallone R."/>
            <person name="Arlt C."/>
            <person name="Rehkamp A."/>
            <person name="Sinz A."/>
            <person name="Dell'Orco D."/>
        </authorList>
    </citation>
    <scope>SUBUNIT</scope>
    <scope>MASS SPECTROMETRY</scope>
</reference>
<reference key="8">
    <citation type="journal article" date="2012" name="Nat. Genet.">
        <title>Alterations of the CIB2 calcium- and integrin-binding protein cause Usher syndrome type 1J and nonsyndromic deafness DFNB48.</title>
        <authorList>
            <person name="Riazuddin S."/>
            <person name="Belyantseva I.A."/>
            <person name="Giese A.P."/>
            <person name="Lee K."/>
            <person name="Indzhykulian A.A."/>
            <person name="Nandamuri S.P."/>
            <person name="Yousaf R."/>
            <person name="Sinha G.P."/>
            <person name="Lee S."/>
            <person name="Terrell D."/>
            <person name="Hegde R.S."/>
            <person name="Ali R.A."/>
            <person name="Anwar S."/>
            <person name="Andrade-Elizondo P.B."/>
            <person name="Sirmaci A."/>
            <person name="Parise L.V."/>
            <person name="Basit S."/>
            <person name="Wali A."/>
            <person name="Ayub M."/>
            <person name="Ansar M."/>
            <person name="Ahmad W."/>
            <person name="Khan S.N."/>
            <person name="Akram J."/>
            <person name="Tekin M."/>
            <person name="Riazuddin S."/>
            <person name="Cook T."/>
            <person name="Buschbeck E.K."/>
            <person name="Frolenkov G.I."/>
            <person name="Leal S.M."/>
            <person name="Friedman T.B."/>
            <person name="Ahmed Z.M."/>
        </authorList>
    </citation>
    <scope>VARIANTS DFNB48 SER-91; TRP-99 AND THR-123</scope>
    <scope>VARIANT USH1J ASP-64</scope>
    <scope>FUNCTION</scope>
    <scope>SUBUNIT</scope>
    <scope>INTERACTION WITH WHRN AND MYO7A</scope>
    <scope>TISSUE SPECIFICITY</scope>
</reference>
<reference key="9">
    <citation type="journal article" date="2015" name="Am. J. Med. Genet. A">
        <title>PDZD7 and hearing loss: More than just a modifier.</title>
        <authorList>
            <person name="Booth K.T."/>
            <person name="Azaiez H."/>
            <person name="Kahrizi K."/>
            <person name="Simpson A.C."/>
            <person name="Tollefson W.T."/>
            <person name="Sloan C.M."/>
            <person name="Meyer N.C."/>
            <person name="Babanejad M."/>
            <person name="Ardalani F."/>
            <person name="Arzhangi S."/>
            <person name="Schnieders M.J."/>
            <person name="Najmabadi H."/>
            <person name="Smith R.J."/>
        </authorList>
    </citation>
    <scope>VARIANT MET-75</scope>
</reference>
<reference key="10">
    <citation type="journal article" date="2015" name="PLoS ONE">
        <title>A novel c-terminal CIB2 (calcium and integrin binding protein 2) mutation associated with non-syndromic hearing loss in a hispanic family.</title>
        <authorList>
            <person name="Patel K."/>
            <person name="Giese A.P."/>
            <person name="Grossheim J.M."/>
            <person name="Hegde R.S."/>
            <person name="Hegde R.S."/>
            <person name="Delio M."/>
            <person name="Samanich J."/>
            <person name="Riazuddin S."/>
            <person name="Frolenkov G.I."/>
            <person name="Cai J."/>
            <person name="Ahmed Z.M."/>
            <person name="Morrow B.E."/>
        </authorList>
    </citation>
    <scope>VARIANT DFNB48 TRP-186</scope>
    <scope>CHARACTERIZATION OF VARIANTS DFNB48 SER-91 AND TRP-186</scope>
    <scope>INTERACTION WITH WHRN</scope>
    <scope>FUNCTION</scope>
    <scope>SUBCELLULAR LOCATION</scope>
</reference>
<reference key="11">
    <citation type="journal article" date="2016" name="Eur. J. Hum. Genet.">
        <title>Novel and recurrent CIB2 variants, associated with nonsyndromic deafness, do not affect calcium buffering and localization in hair cells.</title>
        <authorList>
            <person name="Seco C.Z."/>
            <person name="Giese A.P."/>
            <person name="Shafique S."/>
            <person name="Schraders M."/>
            <person name="Oonk A.M."/>
            <person name="Grossheim M."/>
            <person name="Oostrik J."/>
            <person name="Strom T."/>
            <person name="Hegde R."/>
            <person name="van Wijk E."/>
            <person name="Frolenkov G.I."/>
            <person name="Azam M."/>
            <person name="Yntema H.G."/>
            <person name="Free R.H."/>
            <person name="Riazuddin S."/>
            <person name="Verheij J.B."/>
            <person name="Admiraal R.J."/>
            <person name="Qamar R."/>
            <person name="Ahmed Z.M."/>
            <person name="Kremer H."/>
        </authorList>
    </citation>
    <scope>VARIANTS DFNB48 TRP-66 AND SER-91</scope>
    <scope>CHARACTERIZATION OF VARIANTS DFNB48 TRP-66 AND SER-91</scope>
    <scope>FUNCTION</scope>
    <scope>SUBCELLULAR LOCATION</scope>
</reference>
<reference key="12">
    <citation type="journal article" date="2017" name="EMBO Mol. Med.">
        <title>CIB2, defective in isolated deafness, is key for auditory hair cell mechanotransduction and survival.</title>
        <authorList>
            <person name="Michel V."/>
            <person name="Booth K.T."/>
            <person name="Patni P."/>
            <person name="Cortese M."/>
            <person name="Azaiez H."/>
            <person name="Bahloul A."/>
            <person name="Kahrizi K."/>
            <person name="Labbe M."/>
            <person name="Emptoz A."/>
            <person name="Lelli A."/>
            <person name="Degardin J."/>
            <person name="Dupont T."/>
            <person name="Aghaie A."/>
            <person name="Oficjalska-Pham D."/>
            <person name="Picaud S."/>
            <person name="Najmabadi H."/>
            <person name="Smith R.J."/>
            <person name="Bowl M.R."/>
            <person name="Brown S.D."/>
            <person name="Avan P."/>
            <person name="Petit C."/>
            <person name="El-Amraoui A."/>
        </authorList>
    </citation>
    <scope>VARIANTS DFNB48 12-GLN--ILE-187 DEL AND 110-TYR--ILE-187 DEL</scope>
</reference>
<reference key="13">
    <citation type="journal article" date="2017" name="Nat. Commun.">
        <title>CIB2 interacts with TMC1 and TMC2 and is essential for mechanotransduction in auditory hair cells.</title>
        <authorList>
            <person name="Giese A.P.J."/>
            <person name="Tang Y.Q."/>
            <person name="Sinha G.P."/>
            <person name="Bowl M.R."/>
            <person name="Goldring A.C."/>
            <person name="Parker A."/>
            <person name="Freeman M.J."/>
            <person name="Brown S.D.M."/>
            <person name="Riazuddin S."/>
            <person name="Fettiplace R."/>
            <person name="Schafer W.R."/>
            <person name="Frolenkov G.I."/>
            <person name="Ahmed Z.M."/>
        </authorList>
    </citation>
    <scope>CHARACTERIZATION OF VARIANTS DFNB48 ASP-64; SER-91 AND TRP-99</scope>
    <scope>INTERACTION WITH TMC1 AND TMC2</scope>
</reference>
<reference key="14">
    <citation type="journal article" date="2021" name="Neuron">
        <title>CIB2 and CIB3 are auxiliary subunits of the mechanotransduction channel of hair cells.</title>
        <authorList>
            <person name="Liang X."/>
            <person name="Qiu X."/>
            <person name="Dionne G."/>
            <person name="Cunningham C.L."/>
            <person name="Pucak M.L."/>
            <person name="Peng G."/>
            <person name="Kim Y.H."/>
            <person name="Lauer A."/>
            <person name="Shapiro L."/>
            <person name="Mueller U."/>
        </authorList>
    </citation>
    <scope>CHARACTERIZATION OF VARIANTS DFNB48 ASP-64; TRP-66; SER-91; TRP-99; THR-123 AND TRP-186</scope>
    <scope>INTERACTION WITH TMC1 AND TMC2</scope>
</reference>
<sequence>MGNKQTIFTEEQLDNYQDCTFFNKKDILKLHSRFYELAPNLVPMDYRKSPIVHVPMSLIIQMPELRENPFKERIVAAFSEDGEGNLTFNDFVDMFSVLCESAPRELKANYAFKIYDFNTDNFICKEDLELTLARLTKSELDEEEVVLVCDKVIEEADLDGDGKLGFADFEDMIAKAPDFLSTFHIRI</sequence>
<dbReference type="EMBL" id="AB012955">
    <property type="protein sequence ID" value="BAA33584.1"/>
    <property type="molecule type" value="mRNA"/>
</dbReference>
<dbReference type="EMBL" id="AK293167">
    <property type="protein sequence ID" value="BAG56711.1"/>
    <property type="molecule type" value="mRNA"/>
</dbReference>
<dbReference type="EMBL" id="AC090260">
    <property type="status" value="NOT_ANNOTATED_CDS"/>
    <property type="molecule type" value="Genomic_DNA"/>
</dbReference>
<dbReference type="EMBL" id="CH471136">
    <property type="protein sequence ID" value="EAW99183.1"/>
    <property type="molecule type" value="Genomic_DNA"/>
</dbReference>
<dbReference type="EMBL" id="CH471136">
    <property type="protein sequence ID" value="EAW99184.1"/>
    <property type="molecule type" value="Genomic_DNA"/>
</dbReference>
<dbReference type="EMBL" id="CH471136">
    <property type="protein sequence ID" value="EAW99186.1"/>
    <property type="molecule type" value="Genomic_DNA"/>
</dbReference>
<dbReference type="EMBL" id="BC033108">
    <property type="protein sequence ID" value="AAH33108.1"/>
    <property type="molecule type" value="mRNA"/>
</dbReference>
<dbReference type="EMBL" id="BC047381">
    <property type="protein sequence ID" value="AAH47381.1"/>
    <property type="molecule type" value="mRNA"/>
</dbReference>
<dbReference type="CCDS" id="CCDS10296.1">
    <molecule id="O75838-1"/>
</dbReference>
<dbReference type="CCDS" id="CCDS61722.1">
    <molecule id="O75838-3"/>
</dbReference>
<dbReference type="CCDS" id="CCDS61723.1">
    <molecule id="O75838-4"/>
</dbReference>
<dbReference type="RefSeq" id="NP_001258817.1">
    <molecule id="O75838-3"/>
    <property type="nucleotide sequence ID" value="NM_001271888.2"/>
</dbReference>
<dbReference type="RefSeq" id="NP_001258818.1">
    <molecule id="O75838-4"/>
    <property type="nucleotide sequence ID" value="NM_001271889.2"/>
</dbReference>
<dbReference type="RefSeq" id="NP_001288153.1">
    <property type="nucleotide sequence ID" value="NM_001301224.1"/>
</dbReference>
<dbReference type="RefSeq" id="NP_006374.1">
    <molecule id="O75838-1"/>
    <property type="nucleotide sequence ID" value="NM_006383.4"/>
</dbReference>
<dbReference type="RefSeq" id="XP_005254183.1">
    <molecule id="O75838-2"/>
    <property type="nucleotide sequence ID" value="XM_005254126.4"/>
</dbReference>
<dbReference type="RefSeq" id="XP_006720437.1">
    <property type="nucleotide sequence ID" value="XM_006720374.2"/>
</dbReference>
<dbReference type="RefSeq" id="XP_054233182.1">
    <molecule id="O75838-2"/>
    <property type="nucleotide sequence ID" value="XM_054377207.1"/>
</dbReference>
<dbReference type="PDB" id="8XOQ">
    <property type="method" value="X-ray"/>
    <property type="resolution" value="2.41 A"/>
    <property type="chains" value="A/B=1-187"/>
</dbReference>
<dbReference type="PDBsum" id="8XOQ"/>
<dbReference type="SMR" id="O75838"/>
<dbReference type="BioGRID" id="115773">
    <property type="interactions" value="100"/>
</dbReference>
<dbReference type="FunCoup" id="O75838">
    <property type="interactions" value="38"/>
</dbReference>
<dbReference type="IntAct" id="O75838">
    <property type="interactions" value="77"/>
</dbReference>
<dbReference type="STRING" id="9606.ENSP00000258930"/>
<dbReference type="DrugBank" id="DB11093">
    <property type="generic name" value="Calcium citrate"/>
</dbReference>
<dbReference type="DrugBank" id="DB11348">
    <property type="generic name" value="Calcium Phosphate"/>
</dbReference>
<dbReference type="DrugBank" id="DB14481">
    <property type="generic name" value="Calcium phosphate dihydrate"/>
</dbReference>
<dbReference type="TCDB" id="8.A.82.1.10">
    <property type="family name" value="the calmodulin calcium binding protein (calmodulin) family"/>
</dbReference>
<dbReference type="iPTMnet" id="O75838"/>
<dbReference type="PhosphoSitePlus" id="O75838"/>
<dbReference type="BioMuta" id="CIB2"/>
<dbReference type="jPOST" id="O75838"/>
<dbReference type="MassIVE" id="O75838"/>
<dbReference type="PaxDb" id="9606-ENSP00000258930"/>
<dbReference type="PeptideAtlas" id="O75838"/>
<dbReference type="Antibodypedia" id="14987">
    <property type="antibodies" value="192 antibodies from 28 providers"/>
</dbReference>
<dbReference type="DNASU" id="10518"/>
<dbReference type="Ensembl" id="ENST00000258930.8">
    <molecule id="O75838-1"/>
    <property type="protein sequence ID" value="ENSP00000258930.3"/>
    <property type="gene ID" value="ENSG00000136425.14"/>
</dbReference>
<dbReference type="Ensembl" id="ENST00000539011.5">
    <molecule id="O75838-3"/>
    <property type="protein sequence ID" value="ENSP00000442459.1"/>
    <property type="gene ID" value="ENSG00000136425.14"/>
</dbReference>
<dbReference type="Ensembl" id="ENST00000557846.5">
    <molecule id="O75838-4"/>
    <property type="protein sequence ID" value="ENSP00000453488.1"/>
    <property type="gene ID" value="ENSG00000136425.14"/>
</dbReference>
<dbReference type="GeneID" id="10518"/>
<dbReference type="KEGG" id="hsa:10518"/>
<dbReference type="MANE-Select" id="ENST00000258930.8">
    <property type="protein sequence ID" value="ENSP00000258930.3"/>
    <property type="RefSeq nucleotide sequence ID" value="NM_006383.4"/>
    <property type="RefSeq protein sequence ID" value="NP_006374.1"/>
</dbReference>
<dbReference type="UCSC" id="uc002bdb.3">
    <molecule id="O75838-1"/>
    <property type="organism name" value="human"/>
</dbReference>
<dbReference type="AGR" id="HGNC:24579"/>
<dbReference type="CTD" id="10518"/>
<dbReference type="DisGeNET" id="10518"/>
<dbReference type="GeneCards" id="CIB2"/>
<dbReference type="GeneReviews" id="CIB2"/>
<dbReference type="HGNC" id="HGNC:24579">
    <property type="gene designation" value="CIB2"/>
</dbReference>
<dbReference type="HPA" id="ENSG00000136425">
    <property type="expression patterns" value="Tissue enhanced (heart muscle, lymphoid tissue)"/>
</dbReference>
<dbReference type="MalaCards" id="CIB2"/>
<dbReference type="MIM" id="605564">
    <property type="type" value="gene"/>
</dbReference>
<dbReference type="MIM" id="609439">
    <property type="type" value="phenotype"/>
</dbReference>
<dbReference type="MIM" id="614869">
    <property type="type" value="phenotype"/>
</dbReference>
<dbReference type="neXtProt" id="NX_O75838"/>
<dbReference type="OpenTargets" id="ENSG00000136425"/>
<dbReference type="Orphanet" id="90636">
    <property type="disease" value="Rare autosomal recessive non-syndromic sensorineural deafness type DFNB"/>
</dbReference>
<dbReference type="Orphanet" id="231169">
    <property type="disease" value="Usher syndrome type 1"/>
</dbReference>
<dbReference type="PharmGKB" id="PA134927274"/>
<dbReference type="VEuPathDB" id="HostDB:ENSG00000136425"/>
<dbReference type="eggNOG" id="KOG0038">
    <property type="taxonomic scope" value="Eukaryota"/>
</dbReference>
<dbReference type="GeneTree" id="ENSGT00940000157327"/>
<dbReference type="HOGENOM" id="CLU_061288_6_0_1"/>
<dbReference type="InParanoid" id="O75838"/>
<dbReference type="OrthoDB" id="114727at2759"/>
<dbReference type="PAN-GO" id="O75838">
    <property type="GO annotations" value="6 GO annotations based on evolutionary models"/>
</dbReference>
<dbReference type="PhylomeDB" id="O75838"/>
<dbReference type="TreeFam" id="TF313865"/>
<dbReference type="PathwayCommons" id="O75838"/>
<dbReference type="Reactome" id="R-HSA-9662360">
    <property type="pathway name" value="Sensory processing of sound by inner hair cells of the cochlea"/>
</dbReference>
<dbReference type="Reactome" id="R-HSA-9662361">
    <property type="pathway name" value="Sensory processing of sound by outer hair cells of the cochlea"/>
</dbReference>
<dbReference type="SignaLink" id="O75838"/>
<dbReference type="SIGNOR" id="O75838"/>
<dbReference type="BioGRID-ORCS" id="10518">
    <property type="hits" value="11 hits in 1158 CRISPR screens"/>
</dbReference>
<dbReference type="ChiTaRS" id="CIB2">
    <property type="organism name" value="human"/>
</dbReference>
<dbReference type="GenomeRNAi" id="10518"/>
<dbReference type="Pharos" id="O75838">
    <property type="development level" value="Tbio"/>
</dbReference>
<dbReference type="PRO" id="PR:O75838"/>
<dbReference type="Proteomes" id="UP000005640">
    <property type="component" value="Chromosome 15"/>
</dbReference>
<dbReference type="RNAct" id="O75838">
    <property type="molecule type" value="protein"/>
</dbReference>
<dbReference type="Bgee" id="ENSG00000136425">
    <property type="expression patterns" value="Expressed in right atrium auricular region and 192 other cell types or tissues"/>
</dbReference>
<dbReference type="ExpressionAtlas" id="O75838">
    <property type="expression patterns" value="baseline and differential"/>
</dbReference>
<dbReference type="GO" id="GO:0072562">
    <property type="term" value="C:blood microparticle"/>
    <property type="evidence" value="ECO:0007005"/>
    <property type="project" value="UniProtKB"/>
</dbReference>
<dbReference type="GO" id="GO:0071944">
    <property type="term" value="C:cell periphery"/>
    <property type="evidence" value="ECO:0000318"/>
    <property type="project" value="GO_Central"/>
</dbReference>
<dbReference type="GO" id="GO:0032437">
    <property type="term" value="C:cuticular plate"/>
    <property type="evidence" value="ECO:0000314"/>
    <property type="project" value="UniProtKB"/>
</dbReference>
<dbReference type="GO" id="GO:0005737">
    <property type="term" value="C:cytoplasm"/>
    <property type="evidence" value="ECO:0000250"/>
    <property type="project" value="UniProtKB"/>
</dbReference>
<dbReference type="GO" id="GO:0005927">
    <property type="term" value="C:muscle tendon junction"/>
    <property type="evidence" value="ECO:0007669"/>
    <property type="project" value="Ensembl"/>
</dbReference>
<dbReference type="GO" id="GO:0031594">
    <property type="term" value="C:neuromuscular junction"/>
    <property type="evidence" value="ECO:0007669"/>
    <property type="project" value="Ensembl"/>
</dbReference>
<dbReference type="GO" id="GO:0001917">
    <property type="term" value="C:photoreceptor inner segment"/>
    <property type="evidence" value="ECO:0000250"/>
    <property type="project" value="UniProtKB"/>
</dbReference>
<dbReference type="GO" id="GO:0001750">
    <property type="term" value="C:photoreceptor outer segment"/>
    <property type="evidence" value="ECO:0000250"/>
    <property type="project" value="UniProtKB"/>
</dbReference>
<dbReference type="GO" id="GO:0042383">
    <property type="term" value="C:sarcolemma"/>
    <property type="evidence" value="ECO:0007669"/>
    <property type="project" value="UniProtKB-SubCell"/>
</dbReference>
<dbReference type="GO" id="GO:0032420">
    <property type="term" value="C:stereocilium"/>
    <property type="evidence" value="ECO:0000314"/>
    <property type="project" value="UniProtKB"/>
</dbReference>
<dbReference type="GO" id="GO:0005509">
    <property type="term" value="F:calcium ion binding"/>
    <property type="evidence" value="ECO:0000314"/>
    <property type="project" value="UniProtKB"/>
</dbReference>
<dbReference type="GO" id="GO:0005178">
    <property type="term" value="F:integrin binding"/>
    <property type="evidence" value="ECO:0007669"/>
    <property type="project" value="Ensembl"/>
</dbReference>
<dbReference type="GO" id="GO:0000287">
    <property type="term" value="F:magnesium ion binding"/>
    <property type="evidence" value="ECO:0000314"/>
    <property type="project" value="UniProtKB"/>
</dbReference>
<dbReference type="GO" id="GO:0042803">
    <property type="term" value="F:protein homodimerization activity"/>
    <property type="evidence" value="ECO:0000314"/>
    <property type="project" value="UniProtKB"/>
</dbReference>
<dbReference type="GO" id="GO:0055074">
    <property type="term" value="P:calcium ion homeostasis"/>
    <property type="evidence" value="ECO:0000250"/>
    <property type="project" value="UniProtKB"/>
</dbReference>
<dbReference type="GO" id="GO:0071318">
    <property type="term" value="P:cellular response to ATP"/>
    <property type="evidence" value="ECO:0000314"/>
    <property type="project" value="UniProtKB"/>
</dbReference>
<dbReference type="GO" id="GO:0045494">
    <property type="term" value="P:photoreceptor cell maintenance"/>
    <property type="evidence" value="ECO:0000250"/>
    <property type="project" value="UniProtKB"/>
</dbReference>
<dbReference type="GO" id="GO:0007204">
    <property type="term" value="P:positive regulation of cytosolic calcium ion concentration"/>
    <property type="evidence" value="ECO:0000314"/>
    <property type="project" value="UniProtKB"/>
</dbReference>
<dbReference type="CDD" id="cd00051">
    <property type="entry name" value="EFh"/>
    <property type="match status" value="1"/>
</dbReference>
<dbReference type="FunFam" id="1.10.238.10:FF:000035">
    <property type="entry name" value="Calcium and integrin-binding family member 2"/>
    <property type="match status" value="1"/>
</dbReference>
<dbReference type="Gene3D" id="1.10.238.10">
    <property type="entry name" value="EF-hand"/>
    <property type="match status" value="2"/>
</dbReference>
<dbReference type="InterPro" id="IPR051433">
    <property type="entry name" value="CIBP"/>
</dbReference>
<dbReference type="InterPro" id="IPR011992">
    <property type="entry name" value="EF-hand-dom_pair"/>
</dbReference>
<dbReference type="InterPro" id="IPR018247">
    <property type="entry name" value="EF_Hand_1_Ca_BS"/>
</dbReference>
<dbReference type="InterPro" id="IPR002048">
    <property type="entry name" value="EF_hand_dom"/>
</dbReference>
<dbReference type="PANTHER" id="PTHR45791">
    <property type="entry name" value="CALCIUM AND INTEGRIN BINDING FAMILY MEMBER 2"/>
    <property type="match status" value="1"/>
</dbReference>
<dbReference type="PANTHER" id="PTHR45791:SF5">
    <property type="entry name" value="CALCIUM AND INTEGRIN-BINDING FAMILY MEMBER 2"/>
    <property type="match status" value="1"/>
</dbReference>
<dbReference type="Pfam" id="PF13499">
    <property type="entry name" value="EF-hand_7"/>
    <property type="match status" value="1"/>
</dbReference>
<dbReference type="SMART" id="SM00054">
    <property type="entry name" value="EFh"/>
    <property type="match status" value="2"/>
</dbReference>
<dbReference type="SUPFAM" id="SSF47473">
    <property type="entry name" value="EF-hand"/>
    <property type="match status" value="1"/>
</dbReference>
<dbReference type="PROSITE" id="PS00018">
    <property type="entry name" value="EF_HAND_1"/>
    <property type="match status" value="2"/>
</dbReference>
<dbReference type="PROSITE" id="PS50222">
    <property type="entry name" value="EF_HAND_2"/>
    <property type="match status" value="3"/>
</dbReference>
<feature type="chain" id="PRO_0000073534" description="Calcium and integrin-binding family member 2">
    <location>
        <begin position="1"/>
        <end position="187"/>
    </location>
</feature>
<feature type="domain" description="EF-hand 1" evidence="2">
    <location>
        <begin position="66"/>
        <end position="101"/>
    </location>
</feature>
<feature type="domain" description="EF-hand 2" evidence="2">
    <location>
        <begin position="103"/>
        <end position="138"/>
    </location>
</feature>
<feature type="domain" description="EF-hand 3" evidence="2">
    <location>
        <begin position="144"/>
        <end position="179"/>
    </location>
</feature>
<feature type="binding site" evidence="2">
    <location>
        <position position="116"/>
    </location>
    <ligand>
        <name>Ca(2+)</name>
        <dbReference type="ChEBI" id="CHEBI:29108"/>
        <label>1</label>
    </ligand>
</feature>
<feature type="binding site" evidence="2">
    <location>
        <position position="118"/>
    </location>
    <ligand>
        <name>Ca(2+)</name>
        <dbReference type="ChEBI" id="CHEBI:29108"/>
        <label>1</label>
    </ligand>
</feature>
<feature type="binding site" evidence="2">
    <location>
        <position position="120"/>
    </location>
    <ligand>
        <name>Ca(2+)</name>
        <dbReference type="ChEBI" id="CHEBI:29108"/>
        <label>1</label>
    </ligand>
</feature>
<feature type="binding site" evidence="2">
    <location>
        <position position="127"/>
    </location>
    <ligand>
        <name>Ca(2+)</name>
        <dbReference type="ChEBI" id="CHEBI:29108"/>
        <label>1</label>
    </ligand>
</feature>
<feature type="binding site" evidence="2">
    <location>
        <position position="157"/>
    </location>
    <ligand>
        <name>Ca(2+)</name>
        <dbReference type="ChEBI" id="CHEBI:29108"/>
        <label>2</label>
    </ligand>
</feature>
<feature type="binding site" evidence="2">
    <location>
        <position position="159"/>
    </location>
    <ligand>
        <name>Ca(2+)</name>
        <dbReference type="ChEBI" id="CHEBI:29108"/>
        <label>2</label>
    </ligand>
</feature>
<feature type="binding site" evidence="2">
    <location>
        <position position="161"/>
    </location>
    <ligand>
        <name>Ca(2+)</name>
        <dbReference type="ChEBI" id="CHEBI:29108"/>
        <label>2</label>
    </ligand>
</feature>
<feature type="binding site" evidence="2">
    <location>
        <position position="163"/>
    </location>
    <ligand>
        <name>Ca(2+)</name>
        <dbReference type="ChEBI" id="CHEBI:29108"/>
        <label>2</label>
    </ligand>
</feature>
<feature type="binding site" evidence="2">
    <location>
        <position position="168"/>
    </location>
    <ligand>
        <name>Ca(2+)</name>
        <dbReference type="ChEBI" id="CHEBI:29108"/>
        <label>2</label>
    </ligand>
</feature>
<feature type="splice variant" id="VSP_053863" description="In isoform 3." evidence="13">
    <location>
        <begin position="1"/>
        <end position="43"/>
    </location>
</feature>
<feature type="splice variant" id="VSP_054777" description="In isoform 4." evidence="14">
    <location>
        <begin position="18"/>
        <end position="66"/>
    </location>
</feature>
<feature type="splice variant" id="VSP_053864" description="In isoform 2." evidence="12">
    <original>STFHIRI</original>
    <variation>RCCHYRGRAWAGQSRAGRDVGAEAPITRYL</variation>
    <location>
        <begin position="181"/>
        <end position="187"/>
    </location>
</feature>
<feature type="sequence variant" id="VAR_087038" description="In DFNB48." evidence="9">
    <location>
        <begin position="12"/>
        <end position="187"/>
    </location>
</feature>
<feature type="sequence variant" id="VAR_069086" description="In USH1J and DFNB48; decreases interaction with TMC1 and TMC2; dbSNP:rs145415848." evidence="4 8 11">
    <original>E</original>
    <variation>D</variation>
    <location>
        <position position="64"/>
    </location>
</feature>
<feature type="sequence variant" id="VAR_074552" description="In DFNB48; uncertain significance; decreases interaction with TMC1 and TMC2; no loss of localization to stereocilia; does not affect ATP-induced calcium release; dbSNP:rs780168150." evidence="5 11">
    <original>R</original>
    <variation>W</variation>
    <location>
        <position position="66"/>
    </location>
</feature>
<feature type="sequence variant" id="VAR_080825" description="Found in a family with deafness; uncertain significance; the patient also carries a likely disease-causing mutation in PDZD7; dbSNP:rs758743502." evidence="6">
    <original>V</original>
    <variation>M</variation>
    <location>
        <position position="75"/>
    </location>
</feature>
<feature type="sequence variant" id="VAR_069087" description="In DFNB48; decreases interaction with TMC1 and TMC2; no loss of localization to stereocilia; does not affect ATP-induced calcium release;; dbSNP:rs397515411." evidence="4 5 7 8 11">
    <original>F</original>
    <variation>S</variation>
    <location>
        <position position="91"/>
    </location>
</feature>
<feature type="sequence variant" id="VAR_069088" description="In DFNB48; inhibits the ability to decrease ATP-induced calcium release; decreases interaction with TMC1 and TMC2; dbSNP:rs370965183." evidence="4 8 11">
    <original>C</original>
    <variation>W</variation>
    <location>
        <position position="99"/>
    </location>
</feature>
<feature type="sequence variant" id="VAR_087039" description="In DFNB48; uncertain significance." evidence="9">
    <location>
        <begin position="110"/>
        <end position="187"/>
    </location>
</feature>
<feature type="sequence variant" id="VAR_069089" description="In DFNB48; stimulates the ability to decrease ATP-induced calcium release; decreases interaction with TMC1 and TMC2; dbSNP:rs397515412." evidence="4 11">
    <original>I</original>
    <variation>T</variation>
    <location>
        <position position="123"/>
    </location>
</feature>
<feature type="sequence variant" id="VAR_077559" description="In DFNB48; inhibits the ability to decrease ATP-induced calcium release; decreases interaction with TMC1 and TMC2; does not affect the localization in the cuticular plate or to the tip of stereocilia; does not affect binding with WHRN; dbSNP:rs370359511." evidence="7 11">
    <original>R</original>
    <variation>W</variation>
    <location>
        <position position="186"/>
    </location>
</feature>
<proteinExistence type="evidence at protein level"/>
<keyword id="KW-0002">3D-structure</keyword>
<keyword id="KW-0025">Alternative splicing</keyword>
<keyword id="KW-0106">Calcium</keyword>
<keyword id="KW-1003">Cell membrane</keyword>
<keyword id="KW-0966">Cell projection</keyword>
<keyword id="KW-0969">Cilium</keyword>
<keyword id="KW-0963">Cytoplasm</keyword>
<keyword id="KW-0209">Deafness</keyword>
<keyword id="KW-0225">Disease variant</keyword>
<keyword id="KW-0460">Magnesium</keyword>
<keyword id="KW-0472">Membrane</keyword>
<keyword id="KW-0479">Metal-binding</keyword>
<keyword id="KW-1010">Non-syndromic deafness</keyword>
<keyword id="KW-1267">Proteomics identification</keyword>
<keyword id="KW-1185">Reference proteome</keyword>
<keyword id="KW-0677">Repeat</keyword>
<keyword id="KW-0682">Retinitis pigmentosa</keyword>
<keyword id="KW-0836">Usher syndrome</keyword>
<organism>
    <name type="scientific">Homo sapiens</name>
    <name type="common">Human</name>
    <dbReference type="NCBI Taxonomy" id="9606"/>
    <lineage>
        <taxon>Eukaryota</taxon>
        <taxon>Metazoa</taxon>
        <taxon>Chordata</taxon>
        <taxon>Craniata</taxon>
        <taxon>Vertebrata</taxon>
        <taxon>Euteleostomi</taxon>
        <taxon>Mammalia</taxon>
        <taxon>Eutheria</taxon>
        <taxon>Euarchontoglires</taxon>
        <taxon>Primates</taxon>
        <taxon>Haplorrhini</taxon>
        <taxon>Catarrhini</taxon>
        <taxon>Hominidae</taxon>
        <taxon>Homo</taxon>
    </lineage>
</organism>
<accession>O75838</accession>
<accession>B4DDF0</accession>
<accession>H0YM71</accession>
<accession>Q05BT6</accession>
<evidence type="ECO:0000250" key="1">
    <source>
        <dbReference type="UniProtKB" id="Q9Z309"/>
    </source>
</evidence>
<evidence type="ECO:0000255" key="2">
    <source>
        <dbReference type="PROSITE-ProRule" id="PRU00448"/>
    </source>
</evidence>
<evidence type="ECO:0000269" key="3">
    <source>
    </source>
</evidence>
<evidence type="ECO:0000269" key="4">
    <source>
    </source>
</evidence>
<evidence type="ECO:0000269" key="5">
    <source>
    </source>
</evidence>
<evidence type="ECO:0000269" key="6">
    <source>
    </source>
</evidence>
<evidence type="ECO:0000269" key="7">
    <source>
    </source>
</evidence>
<evidence type="ECO:0000269" key="8">
    <source>
    </source>
</evidence>
<evidence type="ECO:0000269" key="9">
    <source>
    </source>
</evidence>
<evidence type="ECO:0000269" key="10">
    <source>
    </source>
</evidence>
<evidence type="ECO:0000269" key="11">
    <source>
    </source>
</evidence>
<evidence type="ECO:0000303" key="12">
    <source>
    </source>
</evidence>
<evidence type="ECO:0000303" key="13">
    <source>
    </source>
</evidence>
<evidence type="ECO:0000305" key="14"/>
<name>CIB2_HUMAN</name>